<keyword id="KW-1185">Reference proteome</keyword>
<name>YNT3_YEAST</name>
<proteinExistence type="predicted"/>
<feature type="chain" id="PRO_0000203400" description="Uncharacterized protein YNL193W">
    <location>
        <begin position="1"/>
        <end position="558"/>
    </location>
</feature>
<feature type="region of interest" description="Disordered" evidence="1">
    <location>
        <begin position="531"/>
        <end position="558"/>
    </location>
</feature>
<feature type="sequence conflict" description="In Ref. 1; CAA96087." evidence="2" ref="1">
    <original>L</original>
    <variation>V</variation>
    <location>
        <position position="122"/>
    </location>
</feature>
<dbReference type="EMBL" id="Z71469">
    <property type="protein sequence ID" value="CAA96087.1"/>
    <property type="molecule type" value="Genomic_DNA"/>
</dbReference>
<dbReference type="EMBL" id="BK006947">
    <property type="protein sequence ID" value="DAA10360.2"/>
    <property type="molecule type" value="Genomic_DNA"/>
</dbReference>
<dbReference type="PIR" id="S63148">
    <property type="entry name" value="S63148"/>
</dbReference>
<dbReference type="RefSeq" id="NP_014206.2">
    <property type="nucleotide sequence ID" value="NM_001183031.2"/>
</dbReference>
<dbReference type="BioGRID" id="35640">
    <property type="interactions" value="22"/>
</dbReference>
<dbReference type="DIP" id="DIP-5624N"/>
<dbReference type="FunCoup" id="P53870">
    <property type="interactions" value="43"/>
</dbReference>
<dbReference type="IntAct" id="P53870">
    <property type="interactions" value="9"/>
</dbReference>
<dbReference type="STRING" id="4932.YNL193W"/>
<dbReference type="GlyGen" id="P53870">
    <property type="glycosylation" value="2 sites"/>
</dbReference>
<dbReference type="iPTMnet" id="P53870"/>
<dbReference type="PaxDb" id="4932-YNL193W"/>
<dbReference type="PeptideAtlas" id="P53870"/>
<dbReference type="EnsemblFungi" id="YNL193W_mRNA">
    <property type="protein sequence ID" value="YNL193W"/>
    <property type="gene ID" value="YNL193W"/>
</dbReference>
<dbReference type="GeneID" id="855528"/>
<dbReference type="KEGG" id="sce:YNL193W"/>
<dbReference type="AGR" id="SGD:S000005137"/>
<dbReference type="SGD" id="S000005137">
    <property type="gene designation" value="YNL193W"/>
</dbReference>
<dbReference type="VEuPathDB" id="FungiDB:YNL193W"/>
<dbReference type="eggNOG" id="ENOG502S3IE">
    <property type="taxonomic scope" value="Eukaryota"/>
</dbReference>
<dbReference type="HOGENOM" id="CLU_039198_0_0_1"/>
<dbReference type="InParanoid" id="P53870"/>
<dbReference type="OMA" id="WSENAEQ"/>
<dbReference type="OrthoDB" id="5328412at2759"/>
<dbReference type="BioCyc" id="YEAST:G3O-33203-MONOMER"/>
<dbReference type="BioGRID-ORCS" id="855528">
    <property type="hits" value="0 hits in 10 CRISPR screens"/>
</dbReference>
<dbReference type="PRO" id="PR:P53870"/>
<dbReference type="Proteomes" id="UP000002311">
    <property type="component" value="Chromosome XIV"/>
</dbReference>
<dbReference type="RNAct" id="P53870">
    <property type="molecule type" value="protein"/>
</dbReference>
<protein>
    <recommendedName>
        <fullName>Uncharacterized protein YNL193W</fullName>
    </recommendedName>
</protein>
<accession>P53870</accession>
<accession>D6W0Z4</accession>
<organism>
    <name type="scientific">Saccharomyces cerevisiae (strain ATCC 204508 / S288c)</name>
    <name type="common">Baker's yeast</name>
    <dbReference type="NCBI Taxonomy" id="559292"/>
    <lineage>
        <taxon>Eukaryota</taxon>
        <taxon>Fungi</taxon>
        <taxon>Dikarya</taxon>
        <taxon>Ascomycota</taxon>
        <taxon>Saccharomycotina</taxon>
        <taxon>Saccharomycetes</taxon>
        <taxon>Saccharomycetales</taxon>
        <taxon>Saccharomycetaceae</taxon>
        <taxon>Saccharomyces</taxon>
    </lineage>
</organism>
<reference key="1">
    <citation type="journal article" date="1997" name="Nature">
        <title>The nucleotide sequence of Saccharomyces cerevisiae chromosome XIV and its evolutionary implications.</title>
        <authorList>
            <person name="Philippsen P."/>
            <person name="Kleine K."/>
            <person name="Poehlmann R."/>
            <person name="Duesterhoeft A."/>
            <person name="Hamberg K."/>
            <person name="Hegemann J.H."/>
            <person name="Obermaier B."/>
            <person name="Urrestarazu L.A."/>
            <person name="Aert R."/>
            <person name="Albermann K."/>
            <person name="Altmann R."/>
            <person name="Andre B."/>
            <person name="Baladron V."/>
            <person name="Ballesta J.P.G."/>
            <person name="Becam A.-M."/>
            <person name="Beinhauer J.D."/>
            <person name="Boskovic J."/>
            <person name="Buitrago M.J."/>
            <person name="Bussereau F."/>
            <person name="Coster F."/>
            <person name="Crouzet M."/>
            <person name="D'Angelo M."/>
            <person name="Dal Pero F."/>
            <person name="De Antoni A."/>
            <person name="del Rey F."/>
            <person name="Doignon F."/>
            <person name="Domdey H."/>
            <person name="Dubois E."/>
            <person name="Fiedler T.A."/>
            <person name="Fleig U."/>
            <person name="Floeth M."/>
            <person name="Fritz C."/>
            <person name="Gaillardin C."/>
            <person name="Garcia-Cantalejo J.M."/>
            <person name="Glansdorff N."/>
            <person name="Goffeau A."/>
            <person name="Gueldener U."/>
            <person name="Herbert C.J."/>
            <person name="Heumann K."/>
            <person name="Heuss-Neitzel D."/>
            <person name="Hilbert H."/>
            <person name="Hinni K."/>
            <person name="Iraqui Houssaini I."/>
            <person name="Jacquet M."/>
            <person name="Jimenez A."/>
            <person name="Jonniaux J.-L."/>
            <person name="Karpfinger-Hartl L."/>
            <person name="Lanfranchi G."/>
            <person name="Lepingle A."/>
            <person name="Levesque H."/>
            <person name="Lyck R."/>
            <person name="Maftahi M."/>
            <person name="Mallet L."/>
            <person name="Maurer C.T.C."/>
            <person name="Messenguy F."/>
            <person name="Mewes H.-W."/>
            <person name="Moestl D."/>
            <person name="Nasr F."/>
            <person name="Nicaud J.-M."/>
            <person name="Niedenthal R.K."/>
            <person name="Pandolfo D."/>
            <person name="Pierard A."/>
            <person name="Piravandi E."/>
            <person name="Planta R.J."/>
            <person name="Pohl T.M."/>
            <person name="Purnelle B."/>
            <person name="Rebischung C."/>
            <person name="Remacha M.A."/>
            <person name="Revuelta J.L."/>
            <person name="Rinke M."/>
            <person name="Saiz J.E."/>
            <person name="Sartorello F."/>
            <person name="Scherens B."/>
            <person name="Sen-Gupta M."/>
            <person name="Soler-Mira A."/>
            <person name="Urbanus J.H.M."/>
            <person name="Valle G."/>
            <person name="Van Dyck L."/>
            <person name="Verhasselt P."/>
            <person name="Vierendeels F."/>
            <person name="Vissers S."/>
            <person name="Voet M."/>
            <person name="Volckaert G."/>
            <person name="Wach A."/>
            <person name="Wambutt R."/>
            <person name="Wedler H."/>
            <person name="Zollner A."/>
            <person name="Hani J."/>
        </authorList>
    </citation>
    <scope>NUCLEOTIDE SEQUENCE [LARGE SCALE GENOMIC DNA]</scope>
    <source>
        <strain>ATCC 204508 / S288c</strain>
    </source>
</reference>
<reference key="2">
    <citation type="journal article" date="2014" name="G3 (Bethesda)">
        <title>The reference genome sequence of Saccharomyces cerevisiae: Then and now.</title>
        <authorList>
            <person name="Engel S.R."/>
            <person name="Dietrich F.S."/>
            <person name="Fisk D.G."/>
            <person name="Binkley G."/>
            <person name="Balakrishnan R."/>
            <person name="Costanzo M.C."/>
            <person name="Dwight S.S."/>
            <person name="Hitz B.C."/>
            <person name="Karra K."/>
            <person name="Nash R.S."/>
            <person name="Weng S."/>
            <person name="Wong E.D."/>
            <person name="Lloyd P."/>
            <person name="Skrzypek M.S."/>
            <person name="Miyasato S.R."/>
            <person name="Simison M."/>
            <person name="Cherry J.M."/>
        </authorList>
    </citation>
    <scope>GENOME REANNOTATION</scope>
    <scope>SEQUENCE REVISION TO 122</scope>
    <source>
        <strain>ATCC 204508 / S288c</strain>
    </source>
</reference>
<gene>
    <name type="ordered locus">YNL193W</name>
    <name type="ORF">N1400</name>
</gene>
<evidence type="ECO:0000256" key="1">
    <source>
        <dbReference type="SAM" id="MobiDB-lite"/>
    </source>
</evidence>
<evidence type="ECO:0000305" key="2"/>
<sequence>MGPPKNFKHFSKSNKHKKEQKALITQEDFYLAAIDCEEQADRWLLSDIKKCLRFYLKALEHYENGLTALDSTQEGKYNIYYNETRLFLQIYTDYLANNGYINILQYVKMDDMPDLSNLVLSLPQIIQRFEIVYETFPEQRTWDLQFNLLTCYLTLIESLDDTVSPTVAMEGADILTLTNKYIEIFQHLVNYLLQELQNWSENAEQDSDDTDTELQRDTLDEDAMQVTRDGSGIRTNGPVQPPAEVMDVSEQVTPSSLTEVLANSLKFNHALMELVIESKISIEKNVETKILNPIQINFLEDTTNKFYLQLRDIIDSISAAIPLDLKEIGLAKTLIEGLNIISSGTFESLQDFVLQTVSFTDLLDEKDVQGKIDLSLIRVDIVEFAILCLNDYSSDASWKLSGLLTKVLTEARTLLTDYRNQILFLKNQTLNEQLSHVVFQLCDVLVNSSDNELRRYAIKESTEKSQKTPGGAHTLNILMKNANVFLNNAVAISSKQCGLQETIIDKLKRNYIHNQAKERLLFLQRLEQKSNEDDGTSASPTAMTFDMPPEHPFYSHYR</sequence>